<protein>
    <recommendedName>
        <fullName evidence="1">Peptidyl-tRNA hydrolase</fullName>
        <shortName evidence="1">Pth</shortName>
        <ecNumber evidence="1">3.1.1.29</ecNumber>
    </recommendedName>
</protein>
<comment type="function">
    <text evidence="1">Hydrolyzes ribosome-free peptidyl-tRNAs (with 1 or more amino acids incorporated), which drop off the ribosome during protein synthesis, or as a result of ribosome stalling.</text>
</comment>
<comment type="function">
    <text evidence="1">Catalyzes the release of premature peptidyl moieties from peptidyl-tRNA molecules trapped in stalled 50S ribosomal subunits, and thus maintains levels of free tRNAs and 50S ribosomes.</text>
</comment>
<comment type="catalytic activity">
    <reaction evidence="1">
        <text>an N-acyl-L-alpha-aminoacyl-tRNA + H2O = an N-acyl-L-amino acid + a tRNA + H(+)</text>
        <dbReference type="Rhea" id="RHEA:54448"/>
        <dbReference type="Rhea" id="RHEA-COMP:10123"/>
        <dbReference type="Rhea" id="RHEA-COMP:13883"/>
        <dbReference type="ChEBI" id="CHEBI:15377"/>
        <dbReference type="ChEBI" id="CHEBI:15378"/>
        <dbReference type="ChEBI" id="CHEBI:59874"/>
        <dbReference type="ChEBI" id="CHEBI:78442"/>
        <dbReference type="ChEBI" id="CHEBI:138191"/>
        <dbReference type="EC" id="3.1.1.29"/>
    </reaction>
</comment>
<comment type="subunit">
    <text evidence="1">Monomer.</text>
</comment>
<comment type="subcellular location">
    <subcellularLocation>
        <location evidence="1">Cytoplasm</location>
    </subcellularLocation>
</comment>
<comment type="similarity">
    <text evidence="1">Belongs to the PTH family.</text>
</comment>
<comment type="sequence caution" evidence="2">
    <conflict type="erroneous initiation">
        <sequence resource="EMBL-CDS" id="ABF36955"/>
    </conflict>
    <text>Extended N-terminus.</text>
</comment>
<feature type="chain" id="PRO_0000264122" description="Peptidyl-tRNA hydrolase">
    <location>
        <begin position="1"/>
        <end position="189"/>
    </location>
</feature>
<feature type="active site" description="Proton acceptor" evidence="1">
    <location>
        <position position="20"/>
    </location>
</feature>
<feature type="binding site" evidence="1">
    <location>
        <position position="15"/>
    </location>
    <ligand>
        <name>tRNA</name>
        <dbReference type="ChEBI" id="CHEBI:17843"/>
    </ligand>
</feature>
<feature type="binding site" evidence="1">
    <location>
        <position position="66"/>
    </location>
    <ligand>
        <name>tRNA</name>
        <dbReference type="ChEBI" id="CHEBI:17843"/>
    </ligand>
</feature>
<feature type="binding site" evidence="1">
    <location>
        <position position="68"/>
    </location>
    <ligand>
        <name>tRNA</name>
        <dbReference type="ChEBI" id="CHEBI:17843"/>
    </ligand>
</feature>
<feature type="binding site" evidence="1">
    <location>
        <position position="114"/>
    </location>
    <ligand>
        <name>tRNA</name>
        <dbReference type="ChEBI" id="CHEBI:17843"/>
    </ligand>
</feature>
<feature type="site" description="Discriminates between blocked and unblocked aminoacyl-tRNA" evidence="1">
    <location>
        <position position="10"/>
    </location>
</feature>
<feature type="site" description="Stabilizes the basic form of H active site to accept a proton" evidence="1">
    <location>
        <position position="93"/>
    </location>
</feature>
<organism>
    <name type="scientific">Streptococcus pyogenes serotype M4 (strain MGAS10750)</name>
    <dbReference type="NCBI Taxonomy" id="370554"/>
    <lineage>
        <taxon>Bacteria</taxon>
        <taxon>Bacillati</taxon>
        <taxon>Bacillota</taxon>
        <taxon>Bacilli</taxon>
        <taxon>Lactobacillales</taxon>
        <taxon>Streptococcaceae</taxon>
        <taxon>Streptococcus</taxon>
    </lineage>
</organism>
<proteinExistence type="inferred from homology"/>
<gene>
    <name evidence="1" type="primary">pth</name>
    <name type="ordered locus">MGAS10750_Spy0005</name>
</gene>
<reference key="1">
    <citation type="journal article" date="2006" name="Proc. Natl. Acad. Sci. U.S.A.">
        <title>Molecular genetic anatomy of inter- and intraserotype variation in the human bacterial pathogen group A Streptococcus.</title>
        <authorList>
            <person name="Beres S.B."/>
            <person name="Richter E.W."/>
            <person name="Nagiec M.J."/>
            <person name="Sumby P."/>
            <person name="Porcella S.F."/>
            <person name="DeLeo F.R."/>
            <person name="Musser J.M."/>
        </authorList>
    </citation>
    <scope>NUCLEOTIDE SEQUENCE [LARGE SCALE GENOMIC DNA]</scope>
    <source>
        <strain>MGAS10750</strain>
    </source>
</reference>
<accession>Q1J956</accession>
<keyword id="KW-0963">Cytoplasm</keyword>
<keyword id="KW-0378">Hydrolase</keyword>
<keyword id="KW-0694">RNA-binding</keyword>
<keyword id="KW-0820">tRNA-binding</keyword>
<sequence>MVKMIVGLGNPGSKYEKTKHNIGFMAIDNIVKNLDVTFTDDKNFKAQIGSTFINHEKVYFVKPTTFMNNSGIAVKALLTYYNIDITDLIVIYDDLDMEVSKLRLRSKGSAGGHNGIKSIIAHIGTQEFNRIKVGIGRPLKGMTVISHVMGQFNTEDNIAISLTLDRVVNAVKFYLQENDFEKTMQKFNG</sequence>
<dbReference type="EC" id="3.1.1.29" evidence="1"/>
<dbReference type="EMBL" id="CP000262">
    <property type="protein sequence ID" value="ABF36955.1"/>
    <property type="status" value="ALT_INIT"/>
    <property type="molecule type" value="Genomic_DNA"/>
</dbReference>
<dbReference type="SMR" id="Q1J956"/>
<dbReference type="KEGG" id="spi:MGAS10750_Spy0005"/>
<dbReference type="HOGENOM" id="CLU_062456_4_1_9"/>
<dbReference type="Proteomes" id="UP000002434">
    <property type="component" value="Chromosome"/>
</dbReference>
<dbReference type="GO" id="GO:0005737">
    <property type="term" value="C:cytoplasm"/>
    <property type="evidence" value="ECO:0007669"/>
    <property type="project" value="UniProtKB-SubCell"/>
</dbReference>
<dbReference type="GO" id="GO:0004045">
    <property type="term" value="F:peptidyl-tRNA hydrolase activity"/>
    <property type="evidence" value="ECO:0007669"/>
    <property type="project" value="UniProtKB-UniRule"/>
</dbReference>
<dbReference type="GO" id="GO:0000049">
    <property type="term" value="F:tRNA binding"/>
    <property type="evidence" value="ECO:0007669"/>
    <property type="project" value="UniProtKB-UniRule"/>
</dbReference>
<dbReference type="GO" id="GO:0006515">
    <property type="term" value="P:protein quality control for misfolded or incompletely synthesized proteins"/>
    <property type="evidence" value="ECO:0007669"/>
    <property type="project" value="UniProtKB-UniRule"/>
</dbReference>
<dbReference type="GO" id="GO:0072344">
    <property type="term" value="P:rescue of stalled ribosome"/>
    <property type="evidence" value="ECO:0007669"/>
    <property type="project" value="UniProtKB-UniRule"/>
</dbReference>
<dbReference type="CDD" id="cd00462">
    <property type="entry name" value="PTH"/>
    <property type="match status" value="1"/>
</dbReference>
<dbReference type="FunFam" id="3.40.50.1470:FF:000001">
    <property type="entry name" value="Peptidyl-tRNA hydrolase"/>
    <property type="match status" value="1"/>
</dbReference>
<dbReference type="Gene3D" id="3.40.50.1470">
    <property type="entry name" value="Peptidyl-tRNA hydrolase"/>
    <property type="match status" value="1"/>
</dbReference>
<dbReference type="HAMAP" id="MF_00083">
    <property type="entry name" value="Pept_tRNA_hydro_bact"/>
    <property type="match status" value="1"/>
</dbReference>
<dbReference type="InterPro" id="IPR001328">
    <property type="entry name" value="Pept_tRNA_hydro"/>
</dbReference>
<dbReference type="InterPro" id="IPR018171">
    <property type="entry name" value="Pept_tRNA_hydro_CS"/>
</dbReference>
<dbReference type="InterPro" id="IPR036416">
    <property type="entry name" value="Pept_tRNA_hydro_sf"/>
</dbReference>
<dbReference type="NCBIfam" id="TIGR00447">
    <property type="entry name" value="pth"/>
    <property type="match status" value="1"/>
</dbReference>
<dbReference type="PANTHER" id="PTHR17224">
    <property type="entry name" value="PEPTIDYL-TRNA HYDROLASE"/>
    <property type="match status" value="1"/>
</dbReference>
<dbReference type="PANTHER" id="PTHR17224:SF1">
    <property type="entry name" value="PEPTIDYL-TRNA HYDROLASE"/>
    <property type="match status" value="1"/>
</dbReference>
<dbReference type="Pfam" id="PF01195">
    <property type="entry name" value="Pept_tRNA_hydro"/>
    <property type="match status" value="1"/>
</dbReference>
<dbReference type="SUPFAM" id="SSF53178">
    <property type="entry name" value="Peptidyl-tRNA hydrolase-like"/>
    <property type="match status" value="1"/>
</dbReference>
<dbReference type="PROSITE" id="PS01195">
    <property type="entry name" value="PEPT_TRNA_HYDROL_1"/>
    <property type="match status" value="1"/>
</dbReference>
<dbReference type="PROSITE" id="PS01196">
    <property type="entry name" value="PEPT_TRNA_HYDROL_2"/>
    <property type="match status" value="1"/>
</dbReference>
<name>PTH_STRPF</name>
<evidence type="ECO:0000255" key="1">
    <source>
        <dbReference type="HAMAP-Rule" id="MF_00083"/>
    </source>
</evidence>
<evidence type="ECO:0000305" key="2"/>